<protein>
    <recommendedName>
        <fullName evidence="1">Cytochrome c biogenesis protein CcsA</fullName>
    </recommendedName>
</protein>
<reference key="1">
    <citation type="journal article" date="2004" name="DNA Res.">
        <title>Complete chloroplast genome sequence from Korea ginseng (Panax schinseng Nees) and comparative analysis of sequence evolution among 17 vascular plants.</title>
        <authorList>
            <person name="Kim K.-J."/>
            <person name="Lee H.-L."/>
        </authorList>
    </citation>
    <scope>NUCLEOTIDE SEQUENCE [LARGE SCALE GENOMIC DNA]</scope>
</reference>
<gene>
    <name evidence="1" type="primary">ccsA</name>
    <name type="ORF">PSC1167</name>
</gene>
<keyword id="KW-0150">Chloroplast</keyword>
<keyword id="KW-0201">Cytochrome c-type biogenesis</keyword>
<keyword id="KW-0472">Membrane</keyword>
<keyword id="KW-0934">Plastid</keyword>
<keyword id="KW-0793">Thylakoid</keyword>
<keyword id="KW-0812">Transmembrane</keyword>
<keyword id="KW-1133">Transmembrane helix</keyword>
<feature type="chain" id="PRO_0000353781" description="Cytochrome c biogenesis protein CcsA">
    <location>
        <begin position="1"/>
        <end position="320"/>
    </location>
</feature>
<feature type="transmembrane region" description="Helical" evidence="1">
    <location>
        <begin position="15"/>
        <end position="35"/>
    </location>
</feature>
<feature type="transmembrane region" description="Helical" evidence="1">
    <location>
        <begin position="43"/>
        <end position="63"/>
    </location>
</feature>
<feature type="transmembrane region" description="Helical" evidence="1">
    <location>
        <begin position="71"/>
        <end position="91"/>
    </location>
</feature>
<feature type="transmembrane region" description="Helical" evidence="1">
    <location>
        <begin position="98"/>
        <end position="118"/>
    </location>
</feature>
<feature type="transmembrane region" description="Helical" evidence="1">
    <location>
        <begin position="143"/>
        <end position="163"/>
    </location>
</feature>
<feature type="transmembrane region" description="Helical" evidence="1">
    <location>
        <begin position="224"/>
        <end position="244"/>
    </location>
</feature>
<feature type="transmembrane region" description="Helical" evidence="1">
    <location>
        <begin position="251"/>
        <end position="271"/>
    </location>
</feature>
<feature type="transmembrane region" description="Helical" evidence="1">
    <location>
        <begin position="285"/>
        <end position="305"/>
    </location>
</feature>
<name>CCSA_PANGI</name>
<comment type="function">
    <text evidence="1">Required during biogenesis of c-type cytochromes (cytochrome c6 and cytochrome f) at the step of heme attachment.</text>
</comment>
<comment type="subunit">
    <text evidence="1">May interact with Ccs1.</text>
</comment>
<comment type="subcellular location">
    <subcellularLocation>
        <location evidence="1">Plastid</location>
        <location evidence="1">Chloroplast thylakoid membrane</location>
        <topology evidence="1">Multi-pass membrane protein</topology>
    </subcellularLocation>
</comment>
<comment type="similarity">
    <text evidence="1">Belongs to the CcmF/CycK/Ccl1/NrfE/CcsA family.</text>
</comment>
<organism>
    <name type="scientific">Panax ginseng</name>
    <name type="common">Korean ginseng</name>
    <dbReference type="NCBI Taxonomy" id="4054"/>
    <lineage>
        <taxon>Eukaryota</taxon>
        <taxon>Viridiplantae</taxon>
        <taxon>Streptophyta</taxon>
        <taxon>Embryophyta</taxon>
        <taxon>Tracheophyta</taxon>
        <taxon>Spermatophyta</taxon>
        <taxon>Magnoliopsida</taxon>
        <taxon>eudicotyledons</taxon>
        <taxon>Gunneridae</taxon>
        <taxon>Pentapetalae</taxon>
        <taxon>asterids</taxon>
        <taxon>campanulids</taxon>
        <taxon>Apiales</taxon>
        <taxon>Araliaceae</taxon>
        <taxon>Panax</taxon>
    </lineage>
</organism>
<accession>Q68RV7</accession>
<evidence type="ECO:0000255" key="1">
    <source>
        <dbReference type="HAMAP-Rule" id="MF_01391"/>
    </source>
</evidence>
<sequence>MIFSTLEHILTHISFSIVSIVITIHLITLLVDEIIKLYDSSEKGMIAIFLCITGLLVTRWIYSRHFPLSDLYESLIFLSWSLSVIHIVPYFKKKKKNLSTITASSVIFTQGFATSGLLTEIHQSAILVPALQSEWLIMHVSMMILSYAALLCGSLLSVALLVITFRKNRNIFCKRNPLLNELFSFGEIQYMNERNNVLRTTFFSAKNYYRSQLIQQLDYWSYRVISLGFIFLTIGILSGAVWANEAWGSYWNWDPKETWAFITWIVFAIYLHTRTNIKLRGANSAIVASIGFLIIWICYFGVNLLGIGLHSYGSFTLTSN</sequence>
<proteinExistence type="inferred from homology"/>
<dbReference type="EMBL" id="AY582139">
    <property type="protein sequence ID" value="AAT98559.1"/>
    <property type="molecule type" value="Genomic_DNA"/>
</dbReference>
<dbReference type="RefSeq" id="YP_087015.1">
    <property type="nucleotide sequence ID" value="NC_006290.1"/>
</dbReference>
<dbReference type="SMR" id="Q68RV7"/>
<dbReference type="GeneID" id="3021582"/>
<dbReference type="GO" id="GO:0009535">
    <property type="term" value="C:chloroplast thylakoid membrane"/>
    <property type="evidence" value="ECO:0007669"/>
    <property type="project" value="UniProtKB-SubCell"/>
</dbReference>
<dbReference type="GO" id="GO:0005886">
    <property type="term" value="C:plasma membrane"/>
    <property type="evidence" value="ECO:0007669"/>
    <property type="project" value="TreeGrafter"/>
</dbReference>
<dbReference type="GO" id="GO:0020037">
    <property type="term" value="F:heme binding"/>
    <property type="evidence" value="ECO:0007669"/>
    <property type="project" value="InterPro"/>
</dbReference>
<dbReference type="GO" id="GO:0017004">
    <property type="term" value="P:cytochrome complex assembly"/>
    <property type="evidence" value="ECO:0007669"/>
    <property type="project" value="UniProtKB-UniRule"/>
</dbReference>
<dbReference type="HAMAP" id="MF_01391">
    <property type="entry name" value="CytC_CcsA"/>
    <property type="match status" value="1"/>
</dbReference>
<dbReference type="InterPro" id="IPR002541">
    <property type="entry name" value="Cyt_c_assembly"/>
</dbReference>
<dbReference type="InterPro" id="IPR017562">
    <property type="entry name" value="Cyt_c_biogenesis_CcsA"/>
</dbReference>
<dbReference type="InterPro" id="IPR045062">
    <property type="entry name" value="Cyt_c_biogenesis_CcsA/CcmC"/>
</dbReference>
<dbReference type="NCBIfam" id="TIGR03144">
    <property type="entry name" value="cytochr_II_ccsB"/>
    <property type="match status" value="1"/>
</dbReference>
<dbReference type="PANTHER" id="PTHR30071:SF1">
    <property type="entry name" value="CYTOCHROME B_B6 PROTEIN-RELATED"/>
    <property type="match status" value="1"/>
</dbReference>
<dbReference type="PANTHER" id="PTHR30071">
    <property type="entry name" value="HEME EXPORTER PROTEIN C"/>
    <property type="match status" value="1"/>
</dbReference>
<dbReference type="Pfam" id="PF01578">
    <property type="entry name" value="Cytochrom_C_asm"/>
    <property type="match status" value="1"/>
</dbReference>
<geneLocation type="chloroplast"/>